<gene>
    <name evidence="1" type="primary">nuoI</name>
    <name type="ordered locus">BRADO4176</name>
</gene>
<reference key="1">
    <citation type="journal article" date="2007" name="Science">
        <title>Legumes symbioses: absence of nod genes in photosynthetic bradyrhizobia.</title>
        <authorList>
            <person name="Giraud E."/>
            <person name="Moulin L."/>
            <person name="Vallenet D."/>
            <person name="Barbe V."/>
            <person name="Cytryn E."/>
            <person name="Avarre J.-C."/>
            <person name="Jaubert M."/>
            <person name="Simon D."/>
            <person name="Cartieaux F."/>
            <person name="Prin Y."/>
            <person name="Bena G."/>
            <person name="Hannibal L."/>
            <person name="Fardoux J."/>
            <person name="Kojadinovic M."/>
            <person name="Vuillet L."/>
            <person name="Lajus A."/>
            <person name="Cruveiller S."/>
            <person name="Rouy Z."/>
            <person name="Mangenot S."/>
            <person name="Segurens B."/>
            <person name="Dossat C."/>
            <person name="Franck W.L."/>
            <person name="Chang W.-S."/>
            <person name="Saunders E."/>
            <person name="Bruce D."/>
            <person name="Richardson P."/>
            <person name="Normand P."/>
            <person name="Dreyfus B."/>
            <person name="Pignol D."/>
            <person name="Stacey G."/>
            <person name="Emerich D."/>
            <person name="Vermeglio A."/>
            <person name="Medigue C."/>
            <person name="Sadowsky M."/>
        </authorList>
    </citation>
    <scope>NUCLEOTIDE SEQUENCE [LARGE SCALE GENOMIC DNA]</scope>
    <source>
        <strain>ORS 278</strain>
    </source>
</reference>
<feature type="chain" id="PRO_0000298483" description="NADH-quinone oxidoreductase subunit I">
    <location>
        <begin position="1"/>
        <end position="162"/>
    </location>
</feature>
<feature type="domain" description="4Fe-4S ferredoxin-type 1" evidence="1">
    <location>
        <begin position="52"/>
        <end position="82"/>
    </location>
</feature>
<feature type="domain" description="4Fe-4S ferredoxin-type 2" evidence="1">
    <location>
        <begin position="93"/>
        <end position="122"/>
    </location>
</feature>
<feature type="binding site" evidence="1">
    <location>
        <position position="62"/>
    </location>
    <ligand>
        <name>[4Fe-4S] cluster</name>
        <dbReference type="ChEBI" id="CHEBI:49883"/>
        <label>1</label>
    </ligand>
</feature>
<feature type="binding site" evidence="1">
    <location>
        <position position="65"/>
    </location>
    <ligand>
        <name>[4Fe-4S] cluster</name>
        <dbReference type="ChEBI" id="CHEBI:49883"/>
        <label>1</label>
    </ligand>
</feature>
<feature type="binding site" evidence="1">
    <location>
        <position position="68"/>
    </location>
    <ligand>
        <name>[4Fe-4S] cluster</name>
        <dbReference type="ChEBI" id="CHEBI:49883"/>
        <label>1</label>
    </ligand>
</feature>
<feature type="binding site" evidence="1">
    <location>
        <position position="72"/>
    </location>
    <ligand>
        <name>[4Fe-4S] cluster</name>
        <dbReference type="ChEBI" id="CHEBI:49883"/>
        <label>2</label>
    </ligand>
</feature>
<feature type="binding site" evidence="1">
    <location>
        <position position="102"/>
    </location>
    <ligand>
        <name>[4Fe-4S] cluster</name>
        <dbReference type="ChEBI" id="CHEBI:49883"/>
        <label>2</label>
    </ligand>
</feature>
<feature type="binding site" evidence="1">
    <location>
        <position position="105"/>
    </location>
    <ligand>
        <name>[4Fe-4S] cluster</name>
        <dbReference type="ChEBI" id="CHEBI:49883"/>
        <label>2</label>
    </ligand>
</feature>
<feature type="binding site" evidence="1">
    <location>
        <position position="108"/>
    </location>
    <ligand>
        <name>[4Fe-4S] cluster</name>
        <dbReference type="ChEBI" id="CHEBI:49883"/>
        <label>2</label>
    </ligand>
</feature>
<feature type="binding site" evidence="1">
    <location>
        <position position="112"/>
    </location>
    <ligand>
        <name>[4Fe-4S] cluster</name>
        <dbReference type="ChEBI" id="CHEBI:49883"/>
        <label>1</label>
    </ligand>
</feature>
<comment type="function">
    <text evidence="1">NDH-1 shuttles electrons from NADH, via FMN and iron-sulfur (Fe-S) centers, to quinones in the respiratory chain. The immediate electron acceptor for the enzyme in this species is believed to be ubiquinone. Couples the redox reaction to proton translocation (for every two electrons transferred, four hydrogen ions are translocated across the cytoplasmic membrane), and thus conserves the redox energy in a proton gradient.</text>
</comment>
<comment type="catalytic activity">
    <reaction evidence="1">
        <text>a quinone + NADH + 5 H(+)(in) = a quinol + NAD(+) + 4 H(+)(out)</text>
        <dbReference type="Rhea" id="RHEA:57888"/>
        <dbReference type="ChEBI" id="CHEBI:15378"/>
        <dbReference type="ChEBI" id="CHEBI:24646"/>
        <dbReference type="ChEBI" id="CHEBI:57540"/>
        <dbReference type="ChEBI" id="CHEBI:57945"/>
        <dbReference type="ChEBI" id="CHEBI:132124"/>
    </reaction>
</comment>
<comment type="cofactor">
    <cofactor evidence="1">
        <name>[4Fe-4S] cluster</name>
        <dbReference type="ChEBI" id="CHEBI:49883"/>
    </cofactor>
    <text evidence="1">Binds 2 [4Fe-4S] clusters per subunit.</text>
</comment>
<comment type="subunit">
    <text evidence="1">NDH-1 is composed of 14 different subunits. Subunits NuoA, H, J, K, L, M, N constitute the membrane sector of the complex.</text>
</comment>
<comment type="subcellular location">
    <subcellularLocation>
        <location evidence="1">Cell inner membrane</location>
        <topology evidence="1">Peripheral membrane protein</topology>
    </subcellularLocation>
</comment>
<comment type="similarity">
    <text evidence="1">Belongs to the complex I 23 kDa subunit family.</text>
</comment>
<evidence type="ECO:0000255" key="1">
    <source>
        <dbReference type="HAMAP-Rule" id="MF_01351"/>
    </source>
</evidence>
<sequence length="162" mass="18557">MNISATARSLLLQEFVSAFFLAMRYFFKPKPTLNYPFEKGPISPRFRGEHALRRYPNGEERCIACKLCEAVCPAQAITIEAGPRRNDGTRRTVRYDIDMVKCIYCGLCQEACPVDAIVEGPNFEFATETREELYYDKAKLLANGDRWEREISKAIALDAPYR</sequence>
<accession>A4YVK2</accession>
<organism>
    <name type="scientific">Bradyrhizobium sp. (strain ORS 278)</name>
    <dbReference type="NCBI Taxonomy" id="114615"/>
    <lineage>
        <taxon>Bacteria</taxon>
        <taxon>Pseudomonadati</taxon>
        <taxon>Pseudomonadota</taxon>
        <taxon>Alphaproteobacteria</taxon>
        <taxon>Hyphomicrobiales</taxon>
        <taxon>Nitrobacteraceae</taxon>
        <taxon>Bradyrhizobium</taxon>
    </lineage>
</organism>
<name>NUOI_BRASO</name>
<protein>
    <recommendedName>
        <fullName evidence="1">NADH-quinone oxidoreductase subunit I</fullName>
        <ecNumber evidence="1">7.1.1.-</ecNumber>
    </recommendedName>
    <alternativeName>
        <fullName evidence="1">NADH dehydrogenase I subunit I</fullName>
    </alternativeName>
    <alternativeName>
        <fullName evidence="1">NDH-1 subunit I</fullName>
    </alternativeName>
</protein>
<proteinExistence type="inferred from homology"/>
<keyword id="KW-0004">4Fe-4S</keyword>
<keyword id="KW-0997">Cell inner membrane</keyword>
<keyword id="KW-1003">Cell membrane</keyword>
<keyword id="KW-0408">Iron</keyword>
<keyword id="KW-0411">Iron-sulfur</keyword>
<keyword id="KW-0472">Membrane</keyword>
<keyword id="KW-0479">Metal-binding</keyword>
<keyword id="KW-0520">NAD</keyword>
<keyword id="KW-0874">Quinone</keyword>
<keyword id="KW-1185">Reference proteome</keyword>
<keyword id="KW-0677">Repeat</keyword>
<keyword id="KW-1278">Translocase</keyword>
<keyword id="KW-0830">Ubiquinone</keyword>
<dbReference type="EC" id="7.1.1.-" evidence="1"/>
<dbReference type="EMBL" id="CU234118">
    <property type="protein sequence ID" value="CAL77928.1"/>
    <property type="molecule type" value="Genomic_DNA"/>
</dbReference>
<dbReference type="RefSeq" id="WP_008964550.1">
    <property type="nucleotide sequence ID" value="NC_009445.1"/>
</dbReference>
<dbReference type="SMR" id="A4YVK2"/>
<dbReference type="STRING" id="114615.BRADO4176"/>
<dbReference type="KEGG" id="bra:BRADO4176"/>
<dbReference type="eggNOG" id="COG1143">
    <property type="taxonomic scope" value="Bacteria"/>
</dbReference>
<dbReference type="HOGENOM" id="CLU_067218_5_1_5"/>
<dbReference type="OrthoDB" id="9808559at2"/>
<dbReference type="Proteomes" id="UP000001994">
    <property type="component" value="Chromosome"/>
</dbReference>
<dbReference type="GO" id="GO:0005886">
    <property type="term" value="C:plasma membrane"/>
    <property type="evidence" value="ECO:0007669"/>
    <property type="project" value="UniProtKB-SubCell"/>
</dbReference>
<dbReference type="GO" id="GO:0051539">
    <property type="term" value="F:4 iron, 4 sulfur cluster binding"/>
    <property type="evidence" value="ECO:0007669"/>
    <property type="project" value="UniProtKB-KW"/>
</dbReference>
<dbReference type="GO" id="GO:0005506">
    <property type="term" value="F:iron ion binding"/>
    <property type="evidence" value="ECO:0007669"/>
    <property type="project" value="UniProtKB-UniRule"/>
</dbReference>
<dbReference type="GO" id="GO:0050136">
    <property type="term" value="F:NADH:ubiquinone reductase (non-electrogenic) activity"/>
    <property type="evidence" value="ECO:0007669"/>
    <property type="project" value="UniProtKB-UniRule"/>
</dbReference>
<dbReference type="GO" id="GO:0048038">
    <property type="term" value="F:quinone binding"/>
    <property type="evidence" value="ECO:0007669"/>
    <property type="project" value="UniProtKB-KW"/>
</dbReference>
<dbReference type="GO" id="GO:0009060">
    <property type="term" value="P:aerobic respiration"/>
    <property type="evidence" value="ECO:0007669"/>
    <property type="project" value="TreeGrafter"/>
</dbReference>
<dbReference type="FunFam" id="3.30.70.3270:FF:000001">
    <property type="entry name" value="NADH-quinone oxidoreductase subunit I 1"/>
    <property type="match status" value="1"/>
</dbReference>
<dbReference type="Gene3D" id="3.30.70.3270">
    <property type="match status" value="1"/>
</dbReference>
<dbReference type="HAMAP" id="MF_01351">
    <property type="entry name" value="NDH1_NuoI"/>
    <property type="match status" value="1"/>
</dbReference>
<dbReference type="InterPro" id="IPR017896">
    <property type="entry name" value="4Fe4S_Fe-S-bd"/>
</dbReference>
<dbReference type="InterPro" id="IPR017900">
    <property type="entry name" value="4Fe4S_Fe_S_CS"/>
</dbReference>
<dbReference type="InterPro" id="IPR010226">
    <property type="entry name" value="NADH_quinone_OxRdtase_chainI"/>
</dbReference>
<dbReference type="NCBIfam" id="TIGR01971">
    <property type="entry name" value="NuoI"/>
    <property type="match status" value="1"/>
</dbReference>
<dbReference type="NCBIfam" id="NF004538">
    <property type="entry name" value="PRK05888.1-4"/>
    <property type="match status" value="1"/>
</dbReference>
<dbReference type="NCBIfam" id="NF004539">
    <property type="entry name" value="PRK05888.1-5"/>
    <property type="match status" value="1"/>
</dbReference>
<dbReference type="PANTHER" id="PTHR10849:SF20">
    <property type="entry name" value="NADH DEHYDROGENASE [UBIQUINONE] IRON-SULFUR PROTEIN 8, MITOCHONDRIAL"/>
    <property type="match status" value="1"/>
</dbReference>
<dbReference type="PANTHER" id="PTHR10849">
    <property type="entry name" value="NADH DEHYDROGENASE UBIQUINONE IRON-SULFUR PROTEIN 8, MITOCHONDRIAL"/>
    <property type="match status" value="1"/>
</dbReference>
<dbReference type="Pfam" id="PF12838">
    <property type="entry name" value="Fer4_7"/>
    <property type="match status" value="1"/>
</dbReference>
<dbReference type="SUPFAM" id="SSF54862">
    <property type="entry name" value="4Fe-4S ferredoxins"/>
    <property type="match status" value="1"/>
</dbReference>
<dbReference type="PROSITE" id="PS00198">
    <property type="entry name" value="4FE4S_FER_1"/>
    <property type="match status" value="2"/>
</dbReference>
<dbReference type="PROSITE" id="PS51379">
    <property type="entry name" value="4FE4S_FER_2"/>
    <property type="match status" value="2"/>
</dbReference>